<protein>
    <recommendedName>
        <fullName evidence="8">Import motor subunit, mitochondrial</fullName>
        <ecNumber evidence="2">3.6.4.10</ecNumber>
    </recommendedName>
    <alternativeName>
        <fullName evidence="8">Endonuclease SceI 75 kDa subunit</fullName>
        <shortName evidence="8">Endo.SceI 75 kDa subunit</shortName>
    </alternativeName>
    <alternativeName>
        <fullName evidence="8">Heat shock protein SSC1, mitochondrial</fullName>
    </alternativeName>
    <alternativeName>
        <fullName evidence="8">mtHSP70</fullName>
    </alternativeName>
</protein>
<evidence type="ECO:0000250" key="1">
    <source>
        <dbReference type="UniProtKB" id="P0CS90"/>
    </source>
</evidence>
<evidence type="ECO:0000250" key="2">
    <source>
        <dbReference type="UniProtKB" id="Q05931"/>
    </source>
</evidence>
<evidence type="ECO:0000256" key="3">
    <source>
        <dbReference type="SAM" id="MobiDB-lite"/>
    </source>
</evidence>
<evidence type="ECO:0000269" key="4">
    <source>
    </source>
</evidence>
<evidence type="ECO:0000269" key="5">
    <source>
    </source>
</evidence>
<evidence type="ECO:0000269" key="6">
    <source>
    </source>
</evidence>
<evidence type="ECO:0000269" key="7">
    <source>
    </source>
</evidence>
<evidence type="ECO:0000305" key="8"/>
<organism>
    <name type="scientific">Saccharomyces cerevisiae</name>
    <name type="common">Baker's yeast</name>
    <dbReference type="NCBI Taxonomy" id="4932"/>
    <lineage>
        <taxon>Eukaryota</taxon>
        <taxon>Fungi</taxon>
        <taxon>Dikarya</taxon>
        <taxon>Ascomycota</taxon>
        <taxon>Saccharomycotina</taxon>
        <taxon>Saccharomycetes</taxon>
        <taxon>Saccharomycetales</taxon>
        <taxon>Saccharomycetaceae</taxon>
        <taxon>Saccharomyces</taxon>
    </lineage>
</organism>
<accession>P0CS91</accession>
<accession>D6VWL6</accession>
<accession>P12398</accession>
<reference key="1">
    <citation type="journal article" date="1990" name="J. Biol. Chem.">
        <title>A subunit of yeast site-specific endonuclease SceI is a mitochondrial version of the 70-kDa heat shock protein.</title>
        <authorList>
            <person name="Morishima N."/>
            <person name="Nakagawa K."/>
            <person name="Yamamoto E."/>
            <person name="Shibata T."/>
        </authorList>
    </citation>
    <scope>NUCLEOTIDE SEQUENCE [GENOMIC DNA]</scope>
    <scope>PROTEIN SEQUENCE OF 24-41</scope>
    <source>
        <strain>ATCC 46276 / IAM 4274 / NCYC 1408 / OC-2</strain>
    </source>
</reference>
<reference key="2">
    <citation type="journal article" date="1988" name="Eur. J. Biochem.">
        <title>Subunit structure of a yeast site-specific endodeoxyribonuclease, endo SceI. A study using monoclonal antibodies.</title>
        <authorList>
            <person name="Nakagawa K."/>
            <person name="Hashikawa J."/>
            <person name="Makino O."/>
            <person name="Ando T."/>
            <person name="Shibata T."/>
        </authorList>
    </citation>
    <scope>IDENTIFICATION IN ENDONUCLEASE SCEI</scope>
    <scope>FUNCTION OF ENDONUCLEASE SCEI</scope>
    <source>
        <strain>ATCC 46276 / IAM 4274 / NCYC 1408 / OC-2</strain>
    </source>
</reference>
<reference key="3">
    <citation type="journal article" date="1995" name="Adv. Biophys.">
        <title>Multi-site-specific endonucleases and the initiation of homologous genetic recombination in yeast.</title>
        <authorList>
            <person name="Shibata T."/>
            <person name="Nakagawa K."/>
            <person name="Morishima N."/>
        </authorList>
    </citation>
    <scope>FUNCTION OF ENDONUCLEASE SCEI</scope>
</reference>
<reference key="4">
    <citation type="journal article" date="1999" name="J. Biol. Chem.">
        <title>Stable association of 70-kDa heat shock protein induces latent multisite specificity of a unisite-specific endonuclease in yeast mitochondria.</title>
        <authorList>
            <person name="Mizumura H."/>
            <person name="Shibata T."/>
            <person name="Morishima N."/>
        </authorList>
    </citation>
    <scope>INTERACTION WITH ENS2</scope>
    <scope>FUNCTION IN ENDONUCLEASE SCEI</scope>
</reference>
<gene>
    <name evidence="8" type="primary">SSC1</name>
    <name evidence="8" type="synonym">ENS1</name>
</gene>
<name>HSP77_YEASX</name>
<feature type="transit peptide" description="Mitochondrion" evidence="5">
    <location>
        <begin position="1"/>
        <end position="23"/>
    </location>
</feature>
<feature type="chain" id="PRO_0000417665" description="Import motor subunit, mitochondrial">
    <location>
        <begin position="24"/>
        <end position="655"/>
    </location>
</feature>
<feature type="region of interest" description="Disordered" evidence="3">
    <location>
        <begin position="629"/>
        <end position="655"/>
    </location>
</feature>
<feature type="compositionally biased region" description="Low complexity" evidence="3">
    <location>
        <begin position="637"/>
        <end position="647"/>
    </location>
</feature>
<feature type="modified residue" description="Phosphothreonine" evidence="1">
    <location>
        <position position="330"/>
    </location>
</feature>
<feature type="sequence variant" description="In strain: D273-10B.">
    <location>
        <position position="644"/>
    </location>
</feature>
<feature type="sequence variant" description="In strain: D273-10B.">
    <original>D</original>
    <variation>G</variation>
    <location>
        <position position="651"/>
    </location>
</feature>
<keyword id="KW-0067">ATP-binding</keyword>
<keyword id="KW-0143">Chaperone</keyword>
<keyword id="KW-0903">Direct protein sequencing</keyword>
<keyword id="KW-0378">Hydrolase</keyword>
<keyword id="KW-0496">Mitochondrion</keyword>
<keyword id="KW-0547">Nucleotide-binding</keyword>
<keyword id="KW-0597">Phosphoprotein</keyword>
<keyword id="KW-0346">Stress response</keyword>
<keyword id="KW-0809">Transit peptide</keyword>
<sequence>MLAAKNILNRSSLSSSFRIATRLQSTKVQGSVIGIDLGTTNSAVAIMEGKVPKIIENAEGSRTTPSVVAFTKEGERLVGIPAKRQAVVNPENTLFATKRLIGRRFEDAEVQRDIKQVPYKIVKHSNGDAWVEARGQTYSPAQIGGFVLNKMKETAEAYLGKPVKNAVVTVPAYFNDSQRQATKDAGQIVGLNVLRVVNEPTAAALAYGLEKSDSKVVAVFDLGGGTFDISILDIDNGVFEVKSTNGDTHLGGEDFDIYLLREIVSRFKTETGIDLENDRMAIQRIREAAEKAKIELSSTVSTEINLPFITADASGPKHINMKFSRAQFETLTAPLVKRTVDPVKKALKDAGLSTSDISEVLLVGGMSRMPKVVETVKSLFGKDPSKAVNPDEAVAIGAAVQGAVLSGEVTDVLLLDVTPLSLGIETLGGVFTRLIPRNTTIPTKKSQIFSTAAAGQTSVEIRVFQGERELVRDNKLIGNFTLAGIPPAPKGVPQIEVTFDIDADGIINVSARDKATNKDSSITVAGSSGLSENEIEQMVNDAEKFKSQDEARKQAIETANKADQLANDTENSLKEFEGKVDKAEAQKVRDQITSLKELVARVQGGEEVNAEELKTKTEELQTSSMKLFEQLYKNDSNNNNNNNNGNNAESDETKQ</sequence>
<proteinExistence type="evidence at protein level"/>
<dbReference type="EC" id="3.6.4.10" evidence="2"/>
<dbReference type="EMBL" id="M55275">
    <property type="protein sequence ID" value="AAA34590.1"/>
    <property type="molecule type" value="Genomic_DNA"/>
</dbReference>
<dbReference type="SMR" id="P0CS91"/>
<dbReference type="IntAct" id="P0CS91">
    <property type="interactions" value="1"/>
</dbReference>
<dbReference type="MINT" id="P0CS91"/>
<dbReference type="VEuPathDB" id="FungiDB:YJR045C"/>
<dbReference type="OMA" id="MGTDWKI"/>
<dbReference type="GO" id="GO:0005829">
    <property type="term" value="C:cytosol"/>
    <property type="evidence" value="ECO:0000304"/>
    <property type="project" value="Reactome"/>
</dbReference>
<dbReference type="GO" id="GO:0005743">
    <property type="term" value="C:mitochondrial inner membrane"/>
    <property type="evidence" value="ECO:0000304"/>
    <property type="project" value="Reactome"/>
</dbReference>
<dbReference type="GO" id="GO:0005758">
    <property type="term" value="C:mitochondrial intermembrane space"/>
    <property type="evidence" value="ECO:0000304"/>
    <property type="project" value="Reactome"/>
</dbReference>
<dbReference type="GO" id="GO:0005759">
    <property type="term" value="C:mitochondrial matrix"/>
    <property type="evidence" value="ECO:0007669"/>
    <property type="project" value="UniProtKB-SubCell"/>
</dbReference>
<dbReference type="GO" id="GO:0005524">
    <property type="term" value="F:ATP binding"/>
    <property type="evidence" value="ECO:0007669"/>
    <property type="project" value="UniProtKB-KW"/>
</dbReference>
<dbReference type="GO" id="GO:0140662">
    <property type="term" value="F:ATP-dependent protein folding chaperone"/>
    <property type="evidence" value="ECO:0007669"/>
    <property type="project" value="InterPro"/>
</dbReference>
<dbReference type="GO" id="GO:0016787">
    <property type="term" value="F:hydrolase activity"/>
    <property type="evidence" value="ECO:0007669"/>
    <property type="project" value="UniProtKB-KW"/>
</dbReference>
<dbReference type="GO" id="GO:0051082">
    <property type="term" value="F:unfolded protein binding"/>
    <property type="evidence" value="ECO:0007669"/>
    <property type="project" value="InterPro"/>
</dbReference>
<dbReference type="CDD" id="cd11734">
    <property type="entry name" value="ASKHA_NBD_HSP70_Ssc1_3"/>
    <property type="match status" value="1"/>
</dbReference>
<dbReference type="FunFam" id="2.60.34.10:FF:000014">
    <property type="entry name" value="Chaperone protein DnaK HSP70"/>
    <property type="match status" value="1"/>
</dbReference>
<dbReference type="FunFam" id="3.30.30.30:FF:000003">
    <property type="entry name" value="Heat shock protein 9"/>
    <property type="match status" value="1"/>
</dbReference>
<dbReference type="FunFam" id="1.20.1270.10:FF:000007">
    <property type="entry name" value="Heat shock protein, mitochondrial"/>
    <property type="match status" value="1"/>
</dbReference>
<dbReference type="FunFam" id="3.30.420.40:FF:000004">
    <property type="entry name" value="Molecular chaperone DnaK"/>
    <property type="match status" value="1"/>
</dbReference>
<dbReference type="FunFam" id="3.90.640.10:FF:000003">
    <property type="entry name" value="Molecular chaperone DnaK"/>
    <property type="match status" value="1"/>
</dbReference>
<dbReference type="Gene3D" id="1.20.1270.10">
    <property type="match status" value="1"/>
</dbReference>
<dbReference type="Gene3D" id="3.30.420.40">
    <property type="match status" value="2"/>
</dbReference>
<dbReference type="Gene3D" id="3.90.640.10">
    <property type="entry name" value="Actin, Chain A, domain 4"/>
    <property type="match status" value="1"/>
</dbReference>
<dbReference type="Gene3D" id="2.60.34.10">
    <property type="entry name" value="Substrate Binding Domain Of DNAk, Chain A, domain 1"/>
    <property type="match status" value="1"/>
</dbReference>
<dbReference type="HAMAP" id="MF_00332">
    <property type="entry name" value="DnaK"/>
    <property type="match status" value="1"/>
</dbReference>
<dbReference type="InterPro" id="IPR043129">
    <property type="entry name" value="ATPase_NBD"/>
</dbReference>
<dbReference type="InterPro" id="IPR012725">
    <property type="entry name" value="Chaperone_DnaK"/>
</dbReference>
<dbReference type="InterPro" id="IPR018181">
    <property type="entry name" value="Heat_shock_70_CS"/>
</dbReference>
<dbReference type="InterPro" id="IPR029048">
    <property type="entry name" value="HSP70_C_sf"/>
</dbReference>
<dbReference type="InterPro" id="IPR029047">
    <property type="entry name" value="HSP70_peptide-bd_sf"/>
</dbReference>
<dbReference type="InterPro" id="IPR013126">
    <property type="entry name" value="Hsp_70_fam"/>
</dbReference>
<dbReference type="NCBIfam" id="NF001413">
    <property type="entry name" value="PRK00290.1"/>
    <property type="match status" value="1"/>
</dbReference>
<dbReference type="NCBIfam" id="TIGR02350">
    <property type="entry name" value="prok_dnaK"/>
    <property type="match status" value="1"/>
</dbReference>
<dbReference type="PANTHER" id="PTHR19375">
    <property type="entry name" value="HEAT SHOCK PROTEIN 70KDA"/>
    <property type="match status" value="1"/>
</dbReference>
<dbReference type="Pfam" id="PF00012">
    <property type="entry name" value="HSP70"/>
    <property type="match status" value="1"/>
</dbReference>
<dbReference type="PRINTS" id="PR00301">
    <property type="entry name" value="HEATSHOCK70"/>
</dbReference>
<dbReference type="SUPFAM" id="SSF53067">
    <property type="entry name" value="Actin-like ATPase domain"/>
    <property type="match status" value="2"/>
</dbReference>
<dbReference type="SUPFAM" id="SSF100934">
    <property type="entry name" value="Heat shock protein 70kD (HSP70), C-terminal subdomain"/>
    <property type="match status" value="1"/>
</dbReference>
<dbReference type="SUPFAM" id="SSF100920">
    <property type="entry name" value="Heat shock protein 70kD (HSP70), peptide-binding domain"/>
    <property type="match status" value="1"/>
</dbReference>
<dbReference type="PROSITE" id="PS00297">
    <property type="entry name" value="HSP70_1"/>
    <property type="match status" value="1"/>
</dbReference>
<dbReference type="PROSITE" id="PS00329">
    <property type="entry name" value="HSP70_2"/>
    <property type="match status" value="1"/>
</dbReference>
<dbReference type="PROSITE" id="PS01036">
    <property type="entry name" value="HSP70_3"/>
    <property type="match status" value="1"/>
</dbReference>
<comment type="function">
    <text evidence="1">Essential component of the PAM complex, a complex required for the translocation of transit peptide-containing proteins from the inner membrane into the mitochondrial matrix in an ATP-dependent manner. Constitutes the ATP-driven core of the motor and binds the precursor preprotein. Required for the import of the processed frataxin homolog YFH1 into the mitochondrion (By similarity).</text>
</comment>
<comment type="function">
    <text evidence="4 6 7">Acts as a non-catalytic component of endonuclease SceI (endo.SceI), which cleaves specifically at multiple sites on mitochondrial DNA and produces double-stranded breaks. SSC1 confers broader sequence specificity, greater stability, and higher activity on the catalytic subunit.</text>
</comment>
<comment type="catalytic activity">
    <reaction evidence="2">
        <text>ATP + H2O = ADP + phosphate + H(+)</text>
        <dbReference type="Rhea" id="RHEA:13065"/>
        <dbReference type="ChEBI" id="CHEBI:15377"/>
        <dbReference type="ChEBI" id="CHEBI:15378"/>
        <dbReference type="ChEBI" id="CHEBI:30616"/>
        <dbReference type="ChEBI" id="CHEBI:43474"/>
        <dbReference type="ChEBI" id="CHEBI:456216"/>
        <dbReference type="EC" id="3.6.4.10"/>
    </reaction>
</comment>
<comment type="subunit">
    <text evidence="1 4 6">Component of the PAM complex, at least composed of SSC1 (mtHsp70), MGE1, TIM44, PAM16/TIM16, PAM17 and PAM18/TIM14. In the complex, SSC1 interacts directly with PAM18 and TIM44. Interacts with NAP1 (By similarity). Component of endonuclease SceI (endo.SceI), which is a heterodimer of ENS2 and SSC1.</text>
</comment>
<comment type="interaction">
    <interactant intactId="EBI-7276682">
        <id>P0CS91</id>
    </interactant>
    <interactant intactId="EBI-28366">
        <id>P42844</id>
        <label>ZIM17</label>
    </interactant>
    <organismsDiffer>true</organismsDiffer>
    <experiments>2</experiments>
</comment>
<comment type="subcellular location">
    <subcellularLocation>
        <location evidence="1">Mitochondrion matrix</location>
    </subcellularLocation>
</comment>
<comment type="similarity">
    <text evidence="8">Belongs to the heat shock protein 70 family.</text>
</comment>
<comment type="caution">
    <text evidence="8">S.cerevisiae displays strain polymorphism with regard to Endo.SceI endouclease activity. This is due to the mitochondrion-encoded, catalytic subunit ENS2, which exhibits strain polymorphism. It can be either present as continuous ORF in the mitochondrial genome (e.g. strain IAM 4274), present but disrupted by the insertion of GC clusters (e.g. strain D273-10B/A), or completely absent in the mitochondrial genome (e.g. strain S288c). Sequences for the 2 subunits ENS2 (AC P12294) and SSC1 (AC P0CS91) for an active Endo.SceI endonuclease can be found in strain IAM 4274.</text>
</comment>